<feature type="chain" id="PRO_0000104275" description="Large ribosomal subunit protein uL11">
    <location>
        <begin position="1"/>
        <end position="141"/>
    </location>
</feature>
<comment type="function">
    <text evidence="1">Forms part of the ribosomal stalk which helps the ribosome interact with GTP-bound translation factors.</text>
</comment>
<comment type="subunit">
    <text evidence="1">Part of the ribosomal stalk of the 50S ribosomal subunit. Interacts with L10 and the large rRNA to form the base of the stalk. L10 forms an elongated spine to which L12 dimers bind in a sequential fashion forming a multimeric L10(L12)X complex.</text>
</comment>
<comment type="PTM">
    <text evidence="1">One or more lysine residues are methylated.</text>
</comment>
<comment type="similarity">
    <text evidence="1">Belongs to the universal ribosomal protein uL11 family.</text>
</comment>
<dbReference type="EMBL" id="AE015927">
    <property type="protein sequence ID" value="AAO37065.1"/>
    <property type="molecule type" value="Genomic_DNA"/>
</dbReference>
<dbReference type="RefSeq" id="WP_011100726.1">
    <property type="nucleotide sequence ID" value="NC_004557.1"/>
</dbReference>
<dbReference type="SMR" id="Q890N1"/>
<dbReference type="STRING" id="212717.CTC_02612"/>
<dbReference type="GeneID" id="24253975"/>
<dbReference type="KEGG" id="ctc:CTC_02612"/>
<dbReference type="HOGENOM" id="CLU_074237_2_1_9"/>
<dbReference type="OrthoDB" id="9802408at2"/>
<dbReference type="Proteomes" id="UP000001412">
    <property type="component" value="Chromosome"/>
</dbReference>
<dbReference type="GO" id="GO:0022625">
    <property type="term" value="C:cytosolic large ribosomal subunit"/>
    <property type="evidence" value="ECO:0007669"/>
    <property type="project" value="TreeGrafter"/>
</dbReference>
<dbReference type="GO" id="GO:0070180">
    <property type="term" value="F:large ribosomal subunit rRNA binding"/>
    <property type="evidence" value="ECO:0007669"/>
    <property type="project" value="UniProtKB-UniRule"/>
</dbReference>
<dbReference type="GO" id="GO:0003735">
    <property type="term" value="F:structural constituent of ribosome"/>
    <property type="evidence" value="ECO:0007669"/>
    <property type="project" value="InterPro"/>
</dbReference>
<dbReference type="GO" id="GO:0006412">
    <property type="term" value="P:translation"/>
    <property type="evidence" value="ECO:0007669"/>
    <property type="project" value="UniProtKB-UniRule"/>
</dbReference>
<dbReference type="CDD" id="cd00349">
    <property type="entry name" value="Ribosomal_L11"/>
    <property type="match status" value="1"/>
</dbReference>
<dbReference type="FunFam" id="1.10.10.250:FF:000001">
    <property type="entry name" value="50S ribosomal protein L11"/>
    <property type="match status" value="1"/>
</dbReference>
<dbReference type="FunFam" id="3.30.1550.10:FF:000001">
    <property type="entry name" value="50S ribosomal protein L11"/>
    <property type="match status" value="1"/>
</dbReference>
<dbReference type="Gene3D" id="1.10.10.250">
    <property type="entry name" value="Ribosomal protein L11, C-terminal domain"/>
    <property type="match status" value="1"/>
</dbReference>
<dbReference type="Gene3D" id="3.30.1550.10">
    <property type="entry name" value="Ribosomal protein L11/L12, N-terminal domain"/>
    <property type="match status" value="1"/>
</dbReference>
<dbReference type="HAMAP" id="MF_00736">
    <property type="entry name" value="Ribosomal_uL11"/>
    <property type="match status" value="1"/>
</dbReference>
<dbReference type="InterPro" id="IPR000911">
    <property type="entry name" value="Ribosomal_uL11"/>
</dbReference>
<dbReference type="InterPro" id="IPR006519">
    <property type="entry name" value="Ribosomal_uL11_bac-typ"/>
</dbReference>
<dbReference type="InterPro" id="IPR020783">
    <property type="entry name" value="Ribosomal_uL11_C"/>
</dbReference>
<dbReference type="InterPro" id="IPR036769">
    <property type="entry name" value="Ribosomal_uL11_C_sf"/>
</dbReference>
<dbReference type="InterPro" id="IPR020784">
    <property type="entry name" value="Ribosomal_uL11_N"/>
</dbReference>
<dbReference type="InterPro" id="IPR036796">
    <property type="entry name" value="Ribosomal_uL11_N_sf"/>
</dbReference>
<dbReference type="NCBIfam" id="TIGR01632">
    <property type="entry name" value="L11_bact"/>
    <property type="match status" value="1"/>
</dbReference>
<dbReference type="PANTHER" id="PTHR11661">
    <property type="entry name" value="60S RIBOSOMAL PROTEIN L12"/>
    <property type="match status" value="1"/>
</dbReference>
<dbReference type="PANTHER" id="PTHR11661:SF1">
    <property type="entry name" value="LARGE RIBOSOMAL SUBUNIT PROTEIN UL11M"/>
    <property type="match status" value="1"/>
</dbReference>
<dbReference type="Pfam" id="PF00298">
    <property type="entry name" value="Ribosomal_L11"/>
    <property type="match status" value="1"/>
</dbReference>
<dbReference type="Pfam" id="PF03946">
    <property type="entry name" value="Ribosomal_L11_N"/>
    <property type="match status" value="1"/>
</dbReference>
<dbReference type="SMART" id="SM00649">
    <property type="entry name" value="RL11"/>
    <property type="match status" value="1"/>
</dbReference>
<dbReference type="SUPFAM" id="SSF54747">
    <property type="entry name" value="Ribosomal L11/L12e N-terminal domain"/>
    <property type="match status" value="1"/>
</dbReference>
<dbReference type="SUPFAM" id="SSF46906">
    <property type="entry name" value="Ribosomal protein L11, C-terminal domain"/>
    <property type="match status" value="1"/>
</dbReference>
<dbReference type="PROSITE" id="PS00359">
    <property type="entry name" value="RIBOSOMAL_L11"/>
    <property type="match status" value="1"/>
</dbReference>
<gene>
    <name evidence="1" type="primary">rplK</name>
    <name type="ordered locus">CTC_02612</name>
</gene>
<protein>
    <recommendedName>
        <fullName evidence="1">Large ribosomal subunit protein uL11</fullName>
    </recommendedName>
    <alternativeName>
        <fullName evidence="2">50S ribosomal protein L11</fullName>
    </alternativeName>
</protein>
<reference key="1">
    <citation type="journal article" date="2003" name="Proc. Natl. Acad. Sci. U.S.A.">
        <title>The genome sequence of Clostridium tetani, the causative agent of tetanus disease.</title>
        <authorList>
            <person name="Brueggemann H."/>
            <person name="Baeumer S."/>
            <person name="Fricke W.F."/>
            <person name="Wiezer A."/>
            <person name="Liesegang H."/>
            <person name="Decker I."/>
            <person name="Herzberg C."/>
            <person name="Martinez-Arias R."/>
            <person name="Merkl R."/>
            <person name="Henne A."/>
            <person name="Gottschalk G."/>
        </authorList>
    </citation>
    <scope>NUCLEOTIDE SEQUENCE [LARGE SCALE GENOMIC DNA]</scope>
    <source>
        <strain>Massachusetts / E88</strain>
    </source>
</reference>
<evidence type="ECO:0000255" key="1">
    <source>
        <dbReference type="HAMAP-Rule" id="MF_00736"/>
    </source>
</evidence>
<evidence type="ECO:0000305" key="2"/>
<keyword id="KW-0488">Methylation</keyword>
<keyword id="KW-1185">Reference proteome</keyword>
<keyword id="KW-0687">Ribonucleoprotein</keyword>
<keyword id="KW-0689">Ribosomal protein</keyword>
<keyword id="KW-0694">RNA-binding</keyword>
<keyword id="KW-0699">rRNA-binding</keyword>
<sequence length="141" mass="14821">MAKKVTGMIKLQLAAGKASPAPPVGPALGQHGVNIMAFCKEFNEKTAKQAGLIIPVVITVYQDRSFSFILKTPPAAVLIKKAVGIESGSGVPNKTKVAKITKEQLKEIAEMKMPDLNAGSVEAAMRMVAGTARSMGVTVEE</sequence>
<proteinExistence type="inferred from homology"/>
<accession>Q890N1</accession>
<organism>
    <name type="scientific">Clostridium tetani (strain Massachusetts / E88)</name>
    <dbReference type="NCBI Taxonomy" id="212717"/>
    <lineage>
        <taxon>Bacteria</taxon>
        <taxon>Bacillati</taxon>
        <taxon>Bacillota</taxon>
        <taxon>Clostridia</taxon>
        <taxon>Eubacteriales</taxon>
        <taxon>Clostridiaceae</taxon>
        <taxon>Clostridium</taxon>
    </lineage>
</organism>
<name>RL11_CLOTE</name>